<sequence>MGKVYVFDHPLIQHKLTYIRDKNTGTKEFRELVEEVATLMAFEITRDLPLEEVEIETPVSKAKSKVIAGKKLGVIPILRAGIGMVDGILKLIPAAKVGHIGLYRDPETLKPVEYYVKLPTDVEERDFIVVDPMLATGGSAVEAINALKKRGAKSIKFMCLIAAPEGVEAVKKAHPDVDIYIAALDEKLNDHGYIVPGLGDAGDRLFGTK</sequence>
<keyword id="KW-0021">Allosteric enzyme</keyword>
<keyword id="KW-0328">Glycosyltransferase</keyword>
<keyword id="KW-0342">GTP-binding</keyword>
<keyword id="KW-0460">Magnesium</keyword>
<keyword id="KW-0547">Nucleotide-binding</keyword>
<keyword id="KW-0808">Transferase</keyword>
<comment type="function">
    <text evidence="1">Catalyzes the conversion of uracil and 5-phospho-alpha-D-ribose 1-diphosphate (PRPP) to UMP and diphosphate.</text>
</comment>
<comment type="catalytic activity">
    <reaction evidence="1">
        <text>UMP + diphosphate = 5-phospho-alpha-D-ribose 1-diphosphate + uracil</text>
        <dbReference type="Rhea" id="RHEA:13017"/>
        <dbReference type="ChEBI" id="CHEBI:17568"/>
        <dbReference type="ChEBI" id="CHEBI:33019"/>
        <dbReference type="ChEBI" id="CHEBI:57865"/>
        <dbReference type="ChEBI" id="CHEBI:58017"/>
        <dbReference type="EC" id="2.4.2.9"/>
    </reaction>
</comment>
<comment type="cofactor">
    <cofactor evidence="1">
        <name>Mg(2+)</name>
        <dbReference type="ChEBI" id="CHEBI:18420"/>
    </cofactor>
    <text evidence="1">Binds 1 Mg(2+) ion per subunit. The magnesium is bound as Mg-PRPP.</text>
</comment>
<comment type="activity regulation">
    <text evidence="1">Allosterically activated by GTP.</text>
</comment>
<comment type="pathway">
    <text evidence="1">Pyrimidine metabolism; UMP biosynthesis via salvage pathway; UMP from uracil: step 1/1.</text>
</comment>
<comment type="similarity">
    <text evidence="1">Belongs to the UPRTase family.</text>
</comment>
<evidence type="ECO:0000255" key="1">
    <source>
        <dbReference type="HAMAP-Rule" id="MF_01218"/>
    </source>
</evidence>
<name>UPP_GEOSW</name>
<gene>
    <name evidence="1" type="primary">upp</name>
    <name type="ordered locus">GWCH70_3312</name>
</gene>
<proteinExistence type="inferred from homology"/>
<reference key="1">
    <citation type="submission" date="2009-06" db="EMBL/GenBank/DDBJ databases">
        <title>Complete sequence of chromosome of Geopacillus sp. WCH70.</title>
        <authorList>
            <consortium name="US DOE Joint Genome Institute"/>
            <person name="Lucas S."/>
            <person name="Copeland A."/>
            <person name="Lapidus A."/>
            <person name="Glavina del Rio T."/>
            <person name="Dalin E."/>
            <person name="Tice H."/>
            <person name="Bruce D."/>
            <person name="Goodwin L."/>
            <person name="Pitluck S."/>
            <person name="Chertkov O."/>
            <person name="Brettin T."/>
            <person name="Detter J.C."/>
            <person name="Han C."/>
            <person name="Larimer F."/>
            <person name="Land M."/>
            <person name="Hauser L."/>
            <person name="Kyrpides N."/>
            <person name="Mikhailova N."/>
            <person name="Brumm P."/>
            <person name="Mead D.A."/>
            <person name="Richardson P."/>
        </authorList>
    </citation>
    <scope>NUCLEOTIDE SEQUENCE [LARGE SCALE GENOMIC DNA]</scope>
    <source>
        <strain>WCH70</strain>
    </source>
</reference>
<feature type="chain" id="PRO_1000213934" description="Uracil phosphoribosyltransferase">
    <location>
        <begin position="1"/>
        <end position="209"/>
    </location>
</feature>
<feature type="binding site" evidence="1">
    <location>
        <position position="79"/>
    </location>
    <ligand>
        <name>5-phospho-alpha-D-ribose 1-diphosphate</name>
        <dbReference type="ChEBI" id="CHEBI:58017"/>
    </ligand>
</feature>
<feature type="binding site" evidence="1">
    <location>
        <position position="104"/>
    </location>
    <ligand>
        <name>5-phospho-alpha-D-ribose 1-diphosphate</name>
        <dbReference type="ChEBI" id="CHEBI:58017"/>
    </ligand>
</feature>
<feature type="binding site" evidence="1">
    <location>
        <begin position="131"/>
        <end position="139"/>
    </location>
    <ligand>
        <name>5-phospho-alpha-D-ribose 1-diphosphate</name>
        <dbReference type="ChEBI" id="CHEBI:58017"/>
    </ligand>
</feature>
<feature type="binding site" evidence="1">
    <location>
        <position position="194"/>
    </location>
    <ligand>
        <name>uracil</name>
        <dbReference type="ChEBI" id="CHEBI:17568"/>
    </ligand>
</feature>
<feature type="binding site" evidence="1">
    <location>
        <begin position="199"/>
        <end position="201"/>
    </location>
    <ligand>
        <name>uracil</name>
        <dbReference type="ChEBI" id="CHEBI:17568"/>
    </ligand>
</feature>
<feature type="binding site" evidence="1">
    <location>
        <position position="200"/>
    </location>
    <ligand>
        <name>5-phospho-alpha-D-ribose 1-diphosphate</name>
        <dbReference type="ChEBI" id="CHEBI:58017"/>
    </ligand>
</feature>
<organism>
    <name type="scientific">Geobacillus sp. (strain WCH70)</name>
    <dbReference type="NCBI Taxonomy" id="471223"/>
    <lineage>
        <taxon>Bacteria</taxon>
        <taxon>Bacillati</taxon>
        <taxon>Bacillota</taxon>
        <taxon>Bacilli</taxon>
        <taxon>Bacillales</taxon>
        <taxon>Anoxybacillaceae</taxon>
        <taxon>Geobacillus</taxon>
    </lineage>
</organism>
<accession>C5D9M4</accession>
<dbReference type="EC" id="2.4.2.9" evidence="1"/>
<dbReference type="EMBL" id="CP001638">
    <property type="protein sequence ID" value="ACS25952.1"/>
    <property type="molecule type" value="Genomic_DNA"/>
</dbReference>
<dbReference type="SMR" id="C5D9M4"/>
<dbReference type="STRING" id="471223.GWCH70_3312"/>
<dbReference type="KEGG" id="gwc:GWCH70_3312"/>
<dbReference type="eggNOG" id="COG0035">
    <property type="taxonomic scope" value="Bacteria"/>
</dbReference>
<dbReference type="HOGENOM" id="CLU_067096_2_2_9"/>
<dbReference type="OrthoDB" id="9781675at2"/>
<dbReference type="UniPathway" id="UPA00574">
    <property type="reaction ID" value="UER00636"/>
</dbReference>
<dbReference type="GO" id="GO:0005525">
    <property type="term" value="F:GTP binding"/>
    <property type="evidence" value="ECO:0007669"/>
    <property type="project" value="UniProtKB-KW"/>
</dbReference>
<dbReference type="GO" id="GO:0000287">
    <property type="term" value="F:magnesium ion binding"/>
    <property type="evidence" value="ECO:0007669"/>
    <property type="project" value="UniProtKB-UniRule"/>
</dbReference>
<dbReference type="GO" id="GO:0004845">
    <property type="term" value="F:uracil phosphoribosyltransferase activity"/>
    <property type="evidence" value="ECO:0007669"/>
    <property type="project" value="UniProtKB-UniRule"/>
</dbReference>
<dbReference type="GO" id="GO:0044206">
    <property type="term" value="P:UMP salvage"/>
    <property type="evidence" value="ECO:0007669"/>
    <property type="project" value="UniProtKB-UniRule"/>
</dbReference>
<dbReference type="GO" id="GO:0006223">
    <property type="term" value="P:uracil salvage"/>
    <property type="evidence" value="ECO:0007669"/>
    <property type="project" value="InterPro"/>
</dbReference>
<dbReference type="CDD" id="cd06223">
    <property type="entry name" value="PRTases_typeI"/>
    <property type="match status" value="1"/>
</dbReference>
<dbReference type="FunFam" id="3.40.50.2020:FF:000003">
    <property type="entry name" value="Uracil phosphoribosyltransferase"/>
    <property type="match status" value="1"/>
</dbReference>
<dbReference type="Gene3D" id="3.40.50.2020">
    <property type="match status" value="1"/>
</dbReference>
<dbReference type="HAMAP" id="MF_01218_B">
    <property type="entry name" value="Upp_B"/>
    <property type="match status" value="1"/>
</dbReference>
<dbReference type="InterPro" id="IPR000836">
    <property type="entry name" value="PRibTrfase_dom"/>
</dbReference>
<dbReference type="InterPro" id="IPR029057">
    <property type="entry name" value="PRTase-like"/>
</dbReference>
<dbReference type="InterPro" id="IPR034332">
    <property type="entry name" value="Upp_B"/>
</dbReference>
<dbReference type="InterPro" id="IPR050054">
    <property type="entry name" value="UPRTase/APRTase"/>
</dbReference>
<dbReference type="InterPro" id="IPR005765">
    <property type="entry name" value="Ura_phspho_trans"/>
</dbReference>
<dbReference type="NCBIfam" id="NF001097">
    <property type="entry name" value="PRK00129.1"/>
    <property type="match status" value="1"/>
</dbReference>
<dbReference type="NCBIfam" id="TIGR01091">
    <property type="entry name" value="upp"/>
    <property type="match status" value="1"/>
</dbReference>
<dbReference type="PANTHER" id="PTHR32315">
    <property type="entry name" value="ADENINE PHOSPHORIBOSYLTRANSFERASE"/>
    <property type="match status" value="1"/>
</dbReference>
<dbReference type="PANTHER" id="PTHR32315:SF4">
    <property type="entry name" value="URACIL PHOSPHORIBOSYLTRANSFERASE, CHLOROPLASTIC"/>
    <property type="match status" value="1"/>
</dbReference>
<dbReference type="Pfam" id="PF14681">
    <property type="entry name" value="UPRTase"/>
    <property type="match status" value="1"/>
</dbReference>
<dbReference type="SUPFAM" id="SSF53271">
    <property type="entry name" value="PRTase-like"/>
    <property type="match status" value="1"/>
</dbReference>
<protein>
    <recommendedName>
        <fullName evidence="1">Uracil phosphoribosyltransferase</fullName>
        <ecNumber evidence="1">2.4.2.9</ecNumber>
    </recommendedName>
    <alternativeName>
        <fullName evidence="1">UMP pyrophosphorylase</fullName>
    </alternativeName>
    <alternativeName>
        <fullName evidence="1">UPRTase</fullName>
    </alternativeName>
</protein>